<comment type="function">
    <text evidence="1">Its role in unclear. In contrast to NINJ1 paralog, does not mediate plasma membrane rupture (cytolysis) downstream of necroptotic and pyroptotic programmed cell death. While it is able to oligomerize and form filaments, filaments are curved toward the intracellular space, preventing circularization to mediate plasma membrane rupture. May act as a homophilic transmembrane adhesion molecule involved in nerve regeneration. Promotes axonal growth.</text>
</comment>
<comment type="subunit">
    <text evidence="1">Homooligomer; in response to stimuli, homooligomerizes into filaments. In contrast to NINJ1, the filament is curved toward the intracellular space, preventing its circularization on a relatively flat membrane to mediate plasma membrane rupture: curvature is caused by cholesterol-binding at the cytoplasmic leaflet.</text>
</comment>
<comment type="subcellular location">
    <subcellularLocation>
        <location evidence="1">Cell membrane</location>
        <topology evidence="1">Multi-pass membrane protein</topology>
    </subcellularLocation>
</comment>
<comment type="developmental stage">
    <text evidence="2">In the dorsal root ganglia, already detected at embryonic day 14, increasing until postnatal day 2 where the adult level is reached.</text>
</comment>
<comment type="induction">
    <text evidence="2">By nerve injury; in Schwann cells.</text>
</comment>
<comment type="domain">
    <text evidence="1">Composed of 4 alpha helices: 2 hydrophobic transmembrane regions (alpha3 and alpha4) and 2 alpha helices (alpha1 and alpha2). Alpha1 and alpha2 feature one hydrophobic side and a hydrophilic side. In contrast to NINJ1, does not disrupt membrane integrity. NINJ2 filaments are curved toward the intracellular space due to cholesterol-binding, preventing circularization and ability to mediate plasma membrane rupture.</text>
</comment>
<comment type="similarity">
    <text evidence="4">Belongs to the ninjurin family.</text>
</comment>
<protein>
    <recommendedName>
        <fullName evidence="3">Ninjurin-2</fullName>
    </recommendedName>
    <alternativeName>
        <fullName>Nerve injury-induced protein 2</fullName>
    </alternativeName>
</protein>
<name>NINJ2_MOUSE</name>
<sequence>MESDRETIHLQHRHSMRGGNQRIDLNFYATKKSVAESMLDVALFMSNAMRLKSVLQQGPFAEYYTTLVTLIIVSLLLQVVISLLLVFIAILNLNEVENQRHLNKLNNAATILVFITVVINIFITAFGAHHAASMAARTSSNPI</sequence>
<feature type="chain" id="PRO_0000159647" description="Ninjurin-2">
    <location>
        <begin position="1"/>
        <end position="143"/>
    </location>
</feature>
<feature type="topological domain" description="Extracellular" evidence="1">
    <location>
        <begin position="1"/>
        <end position="61"/>
    </location>
</feature>
<feature type="transmembrane region" description="Helical; Name=Helix alpha3" evidence="1">
    <location>
        <begin position="62"/>
        <end position="93"/>
    </location>
</feature>
<feature type="topological domain" description="Cytoplasmic" evidence="1">
    <location>
        <begin position="94"/>
        <end position="97"/>
    </location>
</feature>
<feature type="transmembrane region" description="Helical;Name=Helix alpha4" evidence="1">
    <location>
        <begin position="98"/>
        <end position="127"/>
    </location>
</feature>
<feature type="topological domain" description="Extracellular" evidence="1">
    <location>
        <begin position="128"/>
        <end position="143"/>
    </location>
</feature>
<feature type="region of interest" description="Helix alpha1" evidence="1">
    <location>
        <begin position="26"/>
        <end position="38"/>
    </location>
</feature>
<feature type="region of interest" description="Helix alpha2" evidence="1">
    <location>
        <begin position="39"/>
        <end position="58"/>
    </location>
</feature>
<feature type="binding site" evidence="1">
    <location>
        <position position="104"/>
    </location>
    <ligand>
        <name>cholesterol</name>
        <dbReference type="ChEBI" id="CHEBI:16113"/>
    </ligand>
</feature>
<evidence type="ECO:0000250" key="1">
    <source>
        <dbReference type="UniProtKB" id="Q9NZG7"/>
    </source>
</evidence>
<evidence type="ECO:0000269" key="2">
    <source>
    </source>
</evidence>
<evidence type="ECO:0000303" key="3">
    <source>
    </source>
</evidence>
<evidence type="ECO:0000305" key="4"/>
<reference key="1">
    <citation type="journal article" date="2000" name="J. Neurosci.">
        <title>Ninjurin2, a novel homophilic adhesion molecule, is expressed in mature sensory and enteric neurons and promotes neurite outgrowth.</title>
        <authorList>
            <person name="Araki T."/>
            <person name="Milbrandt J."/>
        </authorList>
    </citation>
    <scope>NUCLEOTIDE SEQUENCE [MRNA]</scope>
    <scope>DEVELOPMENTAL STAGE</scope>
    <scope>INDUCTION</scope>
</reference>
<accession>Q9JL89</accession>
<keyword id="KW-0130">Cell adhesion</keyword>
<keyword id="KW-1003">Cell membrane</keyword>
<keyword id="KW-0472">Membrane</keyword>
<keyword id="KW-1185">Reference proteome</keyword>
<keyword id="KW-0812">Transmembrane</keyword>
<keyword id="KW-1133">Transmembrane helix</keyword>
<organism>
    <name type="scientific">Mus musculus</name>
    <name type="common">Mouse</name>
    <dbReference type="NCBI Taxonomy" id="10090"/>
    <lineage>
        <taxon>Eukaryota</taxon>
        <taxon>Metazoa</taxon>
        <taxon>Chordata</taxon>
        <taxon>Craniata</taxon>
        <taxon>Vertebrata</taxon>
        <taxon>Euteleostomi</taxon>
        <taxon>Mammalia</taxon>
        <taxon>Eutheria</taxon>
        <taxon>Euarchontoglires</taxon>
        <taxon>Glires</taxon>
        <taxon>Rodentia</taxon>
        <taxon>Myomorpha</taxon>
        <taxon>Muroidea</taxon>
        <taxon>Muridae</taxon>
        <taxon>Murinae</taxon>
        <taxon>Mus</taxon>
        <taxon>Mus</taxon>
    </lineage>
</organism>
<gene>
    <name type="primary">Ninj2</name>
</gene>
<proteinExistence type="evidence at transcript level"/>
<dbReference type="EMBL" id="AF205634">
    <property type="protein sequence ID" value="AAF42829.1"/>
    <property type="molecule type" value="mRNA"/>
</dbReference>
<dbReference type="CCDS" id="CCDS39612.1"/>
<dbReference type="RefSeq" id="NP_057927.1">
    <property type="nucleotide sequence ID" value="NM_016718.3"/>
</dbReference>
<dbReference type="SMR" id="Q9JL89"/>
<dbReference type="FunCoup" id="Q9JL89">
    <property type="interactions" value="47"/>
</dbReference>
<dbReference type="STRING" id="10090.ENSMUSP00000108331"/>
<dbReference type="PhosphoSitePlus" id="Q9JL89"/>
<dbReference type="PaxDb" id="10090-ENSMUSP00000108331"/>
<dbReference type="Antibodypedia" id="22080">
    <property type="antibodies" value="90 antibodies from 16 providers"/>
</dbReference>
<dbReference type="DNASU" id="29862"/>
<dbReference type="Ensembl" id="ENSMUST00000112711.9">
    <property type="protein sequence ID" value="ENSMUSP00000108331.3"/>
    <property type="gene ID" value="ENSMUSG00000041377.13"/>
</dbReference>
<dbReference type="GeneID" id="29862"/>
<dbReference type="KEGG" id="mmu:29862"/>
<dbReference type="UCSC" id="uc009dmx.1">
    <property type="organism name" value="mouse"/>
</dbReference>
<dbReference type="AGR" id="MGI:1352751"/>
<dbReference type="CTD" id="4815"/>
<dbReference type="MGI" id="MGI:1352751">
    <property type="gene designation" value="Ninj2"/>
</dbReference>
<dbReference type="VEuPathDB" id="HostDB:ENSMUSG00000041377"/>
<dbReference type="eggNOG" id="ENOG502S2EJ">
    <property type="taxonomic scope" value="Eukaryota"/>
</dbReference>
<dbReference type="GeneTree" id="ENSGT00940000158219"/>
<dbReference type="HOGENOM" id="CLU_093971_1_0_1"/>
<dbReference type="InParanoid" id="Q9JL89"/>
<dbReference type="OMA" id="GWVHENF"/>
<dbReference type="OrthoDB" id="6114058at2759"/>
<dbReference type="PhylomeDB" id="Q9JL89"/>
<dbReference type="TreeFam" id="TF323538"/>
<dbReference type="BioGRID-ORCS" id="29862">
    <property type="hits" value="3 hits in 76 CRISPR screens"/>
</dbReference>
<dbReference type="ChiTaRS" id="Ninj2">
    <property type="organism name" value="mouse"/>
</dbReference>
<dbReference type="PRO" id="PR:Q9JL89"/>
<dbReference type="Proteomes" id="UP000000589">
    <property type="component" value="Chromosome 6"/>
</dbReference>
<dbReference type="RNAct" id="Q9JL89">
    <property type="molecule type" value="protein"/>
</dbReference>
<dbReference type="Bgee" id="ENSMUSG00000041377">
    <property type="expression patterns" value="Expressed in primary oocyte and 32 other cell types or tissues"/>
</dbReference>
<dbReference type="ExpressionAtlas" id="Q9JL89">
    <property type="expression patterns" value="baseline and differential"/>
</dbReference>
<dbReference type="GO" id="GO:0005886">
    <property type="term" value="C:plasma membrane"/>
    <property type="evidence" value="ECO:0007669"/>
    <property type="project" value="UniProtKB-SubCell"/>
</dbReference>
<dbReference type="GO" id="GO:0015485">
    <property type="term" value="F:cholesterol binding"/>
    <property type="evidence" value="ECO:0000250"/>
    <property type="project" value="UniProtKB"/>
</dbReference>
<dbReference type="GO" id="GO:0007155">
    <property type="term" value="P:cell adhesion"/>
    <property type="evidence" value="ECO:0007669"/>
    <property type="project" value="UniProtKB-KW"/>
</dbReference>
<dbReference type="GO" id="GO:0042246">
    <property type="term" value="P:tissue regeneration"/>
    <property type="evidence" value="ECO:0007669"/>
    <property type="project" value="InterPro"/>
</dbReference>
<dbReference type="InterPro" id="IPR007007">
    <property type="entry name" value="Ninjurin"/>
</dbReference>
<dbReference type="PANTHER" id="PTHR12316:SF24">
    <property type="entry name" value="NINJURIN-2"/>
    <property type="match status" value="1"/>
</dbReference>
<dbReference type="PANTHER" id="PTHR12316">
    <property type="entry name" value="NINJURIN-RELATED"/>
    <property type="match status" value="1"/>
</dbReference>
<dbReference type="Pfam" id="PF04923">
    <property type="entry name" value="Ninjurin"/>
    <property type="match status" value="1"/>
</dbReference>